<dbReference type="EMBL" id="CP000097">
    <property type="protein sequence ID" value="ABB25036.1"/>
    <property type="molecule type" value="Genomic_DNA"/>
</dbReference>
<dbReference type="RefSeq" id="WP_011358903.1">
    <property type="nucleotide sequence ID" value="NC_007513.1"/>
</dbReference>
<dbReference type="SMR" id="Q3B0U2"/>
<dbReference type="STRING" id="316279.Syncc9902_0061"/>
<dbReference type="KEGG" id="sye:Syncc9902_0061"/>
<dbReference type="eggNOG" id="COG1219">
    <property type="taxonomic scope" value="Bacteria"/>
</dbReference>
<dbReference type="HOGENOM" id="CLU_014218_8_2_3"/>
<dbReference type="OrthoDB" id="9804062at2"/>
<dbReference type="Proteomes" id="UP000002712">
    <property type="component" value="Chromosome"/>
</dbReference>
<dbReference type="GO" id="GO:0009376">
    <property type="term" value="C:HslUV protease complex"/>
    <property type="evidence" value="ECO:0007669"/>
    <property type="project" value="TreeGrafter"/>
</dbReference>
<dbReference type="GO" id="GO:0005524">
    <property type="term" value="F:ATP binding"/>
    <property type="evidence" value="ECO:0007669"/>
    <property type="project" value="UniProtKB-UniRule"/>
</dbReference>
<dbReference type="GO" id="GO:0016887">
    <property type="term" value="F:ATP hydrolysis activity"/>
    <property type="evidence" value="ECO:0007669"/>
    <property type="project" value="InterPro"/>
</dbReference>
<dbReference type="GO" id="GO:0140662">
    <property type="term" value="F:ATP-dependent protein folding chaperone"/>
    <property type="evidence" value="ECO:0007669"/>
    <property type="project" value="InterPro"/>
</dbReference>
<dbReference type="GO" id="GO:0046983">
    <property type="term" value="F:protein dimerization activity"/>
    <property type="evidence" value="ECO:0007669"/>
    <property type="project" value="InterPro"/>
</dbReference>
<dbReference type="GO" id="GO:0051082">
    <property type="term" value="F:unfolded protein binding"/>
    <property type="evidence" value="ECO:0007669"/>
    <property type="project" value="UniProtKB-UniRule"/>
</dbReference>
<dbReference type="GO" id="GO:0008270">
    <property type="term" value="F:zinc ion binding"/>
    <property type="evidence" value="ECO:0007669"/>
    <property type="project" value="InterPro"/>
</dbReference>
<dbReference type="GO" id="GO:0051301">
    <property type="term" value="P:cell division"/>
    <property type="evidence" value="ECO:0007669"/>
    <property type="project" value="TreeGrafter"/>
</dbReference>
<dbReference type="GO" id="GO:0051603">
    <property type="term" value="P:proteolysis involved in protein catabolic process"/>
    <property type="evidence" value="ECO:0007669"/>
    <property type="project" value="TreeGrafter"/>
</dbReference>
<dbReference type="CDD" id="cd19497">
    <property type="entry name" value="RecA-like_ClpX"/>
    <property type="match status" value="1"/>
</dbReference>
<dbReference type="FunFam" id="1.10.8.60:FF:000002">
    <property type="entry name" value="ATP-dependent Clp protease ATP-binding subunit ClpX"/>
    <property type="match status" value="1"/>
</dbReference>
<dbReference type="FunFam" id="3.40.50.300:FF:000005">
    <property type="entry name" value="ATP-dependent Clp protease ATP-binding subunit ClpX"/>
    <property type="match status" value="1"/>
</dbReference>
<dbReference type="Gene3D" id="1.10.8.60">
    <property type="match status" value="1"/>
</dbReference>
<dbReference type="Gene3D" id="6.20.220.10">
    <property type="entry name" value="ClpX chaperone, C4-type zinc finger domain"/>
    <property type="match status" value="1"/>
</dbReference>
<dbReference type="Gene3D" id="3.40.50.300">
    <property type="entry name" value="P-loop containing nucleotide triphosphate hydrolases"/>
    <property type="match status" value="1"/>
</dbReference>
<dbReference type="HAMAP" id="MF_00175">
    <property type="entry name" value="ClpX"/>
    <property type="match status" value="1"/>
</dbReference>
<dbReference type="InterPro" id="IPR003593">
    <property type="entry name" value="AAA+_ATPase"/>
</dbReference>
<dbReference type="InterPro" id="IPR050052">
    <property type="entry name" value="ATP-dep_Clp_protease_ClpX"/>
</dbReference>
<dbReference type="InterPro" id="IPR003959">
    <property type="entry name" value="ATPase_AAA_core"/>
</dbReference>
<dbReference type="InterPro" id="IPR019489">
    <property type="entry name" value="Clp_ATPase_C"/>
</dbReference>
<dbReference type="InterPro" id="IPR004487">
    <property type="entry name" value="Clp_protease_ATP-bd_su_ClpX"/>
</dbReference>
<dbReference type="InterPro" id="IPR046425">
    <property type="entry name" value="ClpX_bact"/>
</dbReference>
<dbReference type="InterPro" id="IPR027417">
    <property type="entry name" value="P-loop_NTPase"/>
</dbReference>
<dbReference type="InterPro" id="IPR010603">
    <property type="entry name" value="Znf_CppX_C4"/>
</dbReference>
<dbReference type="InterPro" id="IPR038366">
    <property type="entry name" value="Znf_CppX_C4_sf"/>
</dbReference>
<dbReference type="NCBIfam" id="TIGR00382">
    <property type="entry name" value="clpX"/>
    <property type="match status" value="1"/>
</dbReference>
<dbReference type="NCBIfam" id="NF003745">
    <property type="entry name" value="PRK05342.1"/>
    <property type="match status" value="1"/>
</dbReference>
<dbReference type="PANTHER" id="PTHR48102:SF7">
    <property type="entry name" value="ATP-DEPENDENT CLP PROTEASE ATP-BINDING SUBUNIT CLPX-LIKE, MITOCHONDRIAL"/>
    <property type="match status" value="1"/>
</dbReference>
<dbReference type="PANTHER" id="PTHR48102">
    <property type="entry name" value="ATP-DEPENDENT CLP PROTEASE ATP-BINDING SUBUNIT CLPX-LIKE, MITOCHONDRIAL-RELATED"/>
    <property type="match status" value="1"/>
</dbReference>
<dbReference type="Pfam" id="PF07724">
    <property type="entry name" value="AAA_2"/>
    <property type="match status" value="1"/>
</dbReference>
<dbReference type="Pfam" id="PF10431">
    <property type="entry name" value="ClpB_D2-small"/>
    <property type="match status" value="1"/>
</dbReference>
<dbReference type="Pfam" id="PF06689">
    <property type="entry name" value="zf-C4_ClpX"/>
    <property type="match status" value="1"/>
</dbReference>
<dbReference type="SMART" id="SM00382">
    <property type="entry name" value="AAA"/>
    <property type="match status" value="1"/>
</dbReference>
<dbReference type="SMART" id="SM01086">
    <property type="entry name" value="ClpB_D2-small"/>
    <property type="match status" value="1"/>
</dbReference>
<dbReference type="SMART" id="SM00994">
    <property type="entry name" value="zf-C4_ClpX"/>
    <property type="match status" value="1"/>
</dbReference>
<dbReference type="SUPFAM" id="SSF57716">
    <property type="entry name" value="Glucocorticoid receptor-like (DNA-binding domain)"/>
    <property type="match status" value="1"/>
</dbReference>
<dbReference type="SUPFAM" id="SSF52540">
    <property type="entry name" value="P-loop containing nucleoside triphosphate hydrolases"/>
    <property type="match status" value="1"/>
</dbReference>
<dbReference type="PROSITE" id="PS51902">
    <property type="entry name" value="CLPX_ZB"/>
    <property type="match status" value="1"/>
</dbReference>
<proteinExistence type="inferred from homology"/>
<comment type="function">
    <text evidence="1">ATP-dependent specificity component of the Clp protease. It directs the protease to specific substrates. Can perform chaperone functions in the absence of ClpP.</text>
</comment>
<comment type="subunit">
    <text evidence="1">Component of the ClpX-ClpP complex. Forms a hexameric ring that, in the presence of ATP, binds to fourteen ClpP subunits assembled into a disk-like structure with a central cavity, resembling the structure of eukaryotic proteasomes.</text>
</comment>
<comment type="similarity">
    <text evidence="1">Belongs to the ClpX chaperone family.</text>
</comment>
<reference key="1">
    <citation type="submission" date="2005-08" db="EMBL/GenBank/DDBJ databases">
        <title>Complete sequence of Synechococcus sp. CC9902.</title>
        <authorList>
            <person name="Copeland A."/>
            <person name="Lucas S."/>
            <person name="Lapidus A."/>
            <person name="Barry K."/>
            <person name="Detter J.C."/>
            <person name="Glavina T."/>
            <person name="Hammon N."/>
            <person name="Israni S."/>
            <person name="Pitluck S."/>
            <person name="Martinez M."/>
            <person name="Schmutz J."/>
            <person name="Larimer F."/>
            <person name="Land M."/>
            <person name="Kyrpides N."/>
            <person name="Ivanova N."/>
            <person name="Richardson P."/>
        </authorList>
    </citation>
    <scope>NUCLEOTIDE SEQUENCE [LARGE SCALE GENOMIC DNA]</scope>
    <source>
        <strain>CC9902</strain>
    </source>
</reference>
<organism>
    <name type="scientific">Synechococcus sp. (strain CC9902)</name>
    <dbReference type="NCBI Taxonomy" id="316279"/>
    <lineage>
        <taxon>Bacteria</taxon>
        <taxon>Bacillati</taxon>
        <taxon>Cyanobacteriota</taxon>
        <taxon>Cyanophyceae</taxon>
        <taxon>Synechococcales</taxon>
        <taxon>Synechococcaceae</taxon>
        <taxon>Synechococcus</taxon>
    </lineage>
</organism>
<sequence>MAKFDAHLKCSFCGKSQDQVRKLIAGPGVYICDECIDLCNEILDEELVDSQGNPRAGAEPSRKATPAAHKSNKPAPTLASIPKPLEIKSFLDQQVVGQNAAKKVMSVAVYNHYKRLAWQGDGKGETEETATRLHKSNILLIGPTGCGKTLLAQTLAEMLDVPFAVADATTLTEAGYVGEDVENILLRLLQKADMDVDQAQRGIIYIDEIDKIARKSENPSITRDVSGEGVQQALLKMLEGTVANVPPQGGRKHPYQDCIQIDTSQILFICGGAFVGLEDVVQKRMGRNAIGFMPPADSRGRSRANRDLQAAQVLRNLEPDDLVKYGLIPEFIGRIPVSAVLEPLDEKTLESILTEPRDALVKQFRTLLSMDNVQLQFADDAITAIAQEAHRRKTGARALRGIIEEIMLDLMYDLPSQSSVKDFTVTRSMVEEHTGGKVLPLPGTDQQKTA</sequence>
<evidence type="ECO:0000255" key="1">
    <source>
        <dbReference type="HAMAP-Rule" id="MF_00175"/>
    </source>
</evidence>
<evidence type="ECO:0000255" key="2">
    <source>
        <dbReference type="PROSITE-ProRule" id="PRU01250"/>
    </source>
</evidence>
<evidence type="ECO:0000256" key="3">
    <source>
        <dbReference type="SAM" id="MobiDB-lite"/>
    </source>
</evidence>
<feature type="chain" id="PRO_1000024693" description="ATP-dependent Clp protease ATP-binding subunit ClpX">
    <location>
        <begin position="1"/>
        <end position="450"/>
    </location>
</feature>
<feature type="domain" description="ClpX-type ZB" evidence="2">
    <location>
        <begin position="1"/>
        <end position="51"/>
    </location>
</feature>
<feature type="region of interest" description="Disordered" evidence="3">
    <location>
        <begin position="50"/>
        <end position="78"/>
    </location>
</feature>
<feature type="binding site" evidence="2">
    <location>
        <position position="10"/>
    </location>
    <ligand>
        <name>Zn(2+)</name>
        <dbReference type="ChEBI" id="CHEBI:29105"/>
    </ligand>
</feature>
<feature type="binding site" evidence="2">
    <location>
        <position position="13"/>
    </location>
    <ligand>
        <name>Zn(2+)</name>
        <dbReference type="ChEBI" id="CHEBI:29105"/>
    </ligand>
</feature>
<feature type="binding site" evidence="2">
    <location>
        <position position="32"/>
    </location>
    <ligand>
        <name>Zn(2+)</name>
        <dbReference type="ChEBI" id="CHEBI:29105"/>
    </ligand>
</feature>
<feature type="binding site" evidence="2">
    <location>
        <position position="35"/>
    </location>
    <ligand>
        <name>Zn(2+)</name>
        <dbReference type="ChEBI" id="CHEBI:29105"/>
    </ligand>
</feature>
<feature type="binding site" evidence="1">
    <location>
        <begin position="143"/>
        <end position="150"/>
    </location>
    <ligand>
        <name>ATP</name>
        <dbReference type="ChEBI" id="CHEBI:30616"/>
    </ligand>
</feature>
<accession>Q3B0U2</accession>
<protein>
    <recommendedName>
        <fullName evidence="1">ATP-dependent Clp protease ATP-binding subunit ClpX</fullName>
    </recommendedName>
</protein>
<keyword id="KW-0067">ATP-binding</keyword>
<keyword id="KW-0143">Chaperone</keyword>
<keyword id="KW-0479">Metal-binding</keyword>
<keyword id="KW-0547">Nucleotide-binding</keyword>
<keyword id="KW-1185">Reference proteome</keyword>
<keyword id="KW-0862">Zinc</keyword>
<name>CLPX_SYNS9</name>
<gene>
    <name evidence="1" type="primary">clpX</name>
    <name type="ordered locus">Syncc9902_0061</name>
</gene>